<dbReference type="EC" id="6.5.1.2" evidence="1"/>
<dbReference type="EMBL" id="DQ489736">
    <property type="protein sequence ID" value="ACA82310.1"/>
    <property type="molecule type" value="Genomic_DNA"/>
</dbReference>
<dbReference type="RefSeq" id="WP_004908959.1">
    <property type="nucleotide sequence ID" value="NC_010471.1"/>
</dbReference>
<dbReference type="SMR" id="B1MXQ8"/>
<dbReference type="STRING" id="349519.LCK_00477"/>
<dbReference type="KEGG" id="lci:LCK_00477"/>
<dbReference type="eggNOG" id="COG0272">
    <property type="taxonomic scope" value="Bacteria"/>
</dbReference>
<dbReference type="HOGENOM" id="CLU_007764_2_1_9"/>
<dbReference type="OrthoDB" id="9759736at2"/>
<dbReference type="Proteomes" id="UP000002166">
    <property type="component" value="Chromosome"/>
</dbReference>
<dbReference type="GO" id="GO:0005829">
    <property type="term" value="C:cytosol"/>
    <property type="evidence" value="ECO:0007669"/>
    <property type="project" value="TreeGrafter"/>
</dbReference>
<dbReference type="GO" id="GO:0003677">
    <property type="term" value="F:DNA binding"/>
    <property type="evidence" value="ECO:0007669"/>
    <property type="project" value="InterPro"/>
</dbReference>
<dbReference type="GO" id="GO:0003911">
    <property type="term" value="F:DNA ligase (NAD+) activity"/>
    <property type="evidence" value="ECO:0007669"/>
    <property type="project" value="UniProtKB-UniRule"/>
</dbReference>
<dbReference type="GO" id="GO:0046872">
    <property type="term" value="F:metal ion binding"/>
    <property type="evidence" value="ECO:0007669"/>
    <property type="project" value="UniProtKB-KW"/>
</dbReference>
<dbReference type="GO" id="GO:0006281">
    <property type="term" value="P:DNA repair"/>
    <property type="evidence" value="ECO:0007669"/>
    <property type="project" value="UniProtKB-KW"/>
</dbReference>
<dbReference type="GO" id="GO:0006260">
    <property type="term" value="P:DNA replication"/>
    <property type="evidence" value="ECO:0007669"/>
    <property type="project" value="UniProtKB-KW"/>
</dbReference>
<dbReference type="CDD" id="cd17748">
    <property type="entry name" value="BRCT_DNA_ligase_like"/>
    <property type="match status" value="1"/>
</dbReference>
<dbReference type="CDD" id="cd00114">
    <property type="entry name" value="LIGANc"/>
    <property type="match status" value="1"/>
</dbReference>
<dbReference type="FunFam" id="1.10.150.20:FF:000006">
    <property type="entry name" value="DNA ligase"/>
    <property type="match status" value="1"/>
</dbReference>
<dbReference type="FunFam" id="1.10.150.20:FF:000007">
    <property type="entry name" value="DNA ligase"/>
    <property type="match status" value="1"/>
</dbReference>
<dbReference type="FunFam" id="2.40.50.140:FF:000012">
    <property type="entry name" value="DNA ligase"/>
    <property type="match status" value="1"/>
</dbReference>
<dbReference type="FunFam" id="3.30.470.30:FF:000001">
    <property type="entry name" value="DNA ligase"/>
    <property type="match status" value="1"/>
</dbReference>
<dbReference type="Gene3D" id="6.20.10.30">
    <property type="match status" value="1"/>
</dbReference>
<dbReference type="Gene3D" id="1.10.150.20">
    <property type="entry name" value="5' to 3' exonuclease, C-terminal subdomain"/>
    <property type="match status" value="2"/>
</dbReference>
<dbReference type="Gene3D" id="3.40.50.10190">
    <property type="entry name" value="BRCT domain"/>
    <property type="match status" value="1"/>
</dbReference>
<dbReference type="Gene3D" id="3.30.470.30">
    <property type="entry name" value="DNA ligase/mRNA capping enzyme"/>
    <property type="match status" value="1"/>
</dbReference>
<dbReference type="Gene3D" id="1.10.287.610">
    <property type="entry name" value="Helix hairpin bin"/>
    <property type="match status" value="1"/>
</dbReference>
<dbReference type="Gene3D" id="2.40.50.140">
    <property type="entry name" value="Nucleic acid-binding proteins"/>
    <property type="match status" value="1"/>
</dbReference>
<dbReference type="HAMAP" id="MF_01588">
    <property type="entry name" value="DNA_ligase_A"/>
    <property type="match status" value="1"/>
</dbReference>
<dbReference type="InterPro" id="IPR001357">
    <property type="entry name" value="BRCT_dom"/>
</dbReference>
<dbReference type="InterPro" id="IPR036420">
    <property type="entry name" value="BRCT_dom_sf"/>
</dbReference>
<dbReference type="InterPro" id="IPR041663">
    <property type="entry name" value="DisA/LigA_HHH"/>
</dbReference>
<dbReference type="InterPro" id="IPR001679">
    <property type="entry name" value="DNA_ligase"/>
</dbReference>
<dbReference type="InterPro" id="IPR018239">
    <property type="entry name" value="DNA_ligase_AS"/>
</dbReference>
<dbReference type="InterPro" id="IPR033136">
    <property type="entry name" value="DNA_ligase_CS"/>
</dbReference>
<dbReference type="InterPro" id="IPR013839">
    <property type="entry name" value="DNAligase_adenylation"/>
</dbReference>
<dbReference type="InterPro" id="IPR013840">
    <property type="entry name" value="DNAligase_N"/>
</dbReference>
<dbReference type="InterPro" id="IPR003583">
    <property type="entry name" value="Hlx-hairpin-Hlx_DNA-bd_motif"/>
</dbReference>
<dbReference type="InterPro" id="IPR012340">
    <property type="entry name" value="NA-bd_OB-fold"/>
</dbReference>
<dbReference type="InterPro" id="IPR004150">
    <property type="entry name" value="NAD_DNA_ligase_OB"/>
</dbReference>
<dbReference type="InterPro" id="IPR010994">
    <property type="entry name" value="RuvA_2-like"/>
</dbReference>
<dbReference type="InterPro" id="IPR004149">
    <property type="entry name" value="Znf_DNAligase_C4"/>
</dbReference>
<dbReference type="NCBIfam" id="TIGR00575">
    <property type="entry name" value="dnlj"/>
    <property type="match status" value="1"/>
</dbReference>
<dbReference type="NCBIfam" id="NF005932">
    <property type="entry name" value="PRK07956.1"/>
    <property type="match status" value="1"/>
</dbReference>
<dbReference type="PANTHER" id="PTHR23389">
    <property type="entry name" value="CHROMOSOME TRANSMISSION FIDELITY FACTOR 18"/>
    <property type="match status" value="1"/>
</dbReference>
<dbReference type="PANTHER" id="PTHR23389:SF9">
    <property type="entry name" value="DNA LIGASE"/>
    <property type="match status" value="1"/>
</dbReference>
<dbReference type="Pfam" id="PF00533">
    <property type="entry name" value="BRCT"/>
    <property type="match status" value="1"/>
</dbReference>
<dbReference type="Pfam" id="PF01653">
    <property type="entry name" value="DNA_ligase_aden"/>
    <property type="match status" value="1"/>
</dbReference>
<dbReference type="Pfam" id="PF03120">
    <property type="entry name" value="DNA_ligase_OB"/>
    <property type="match status" value="1"/>
</dbReference>
<dbReference type="Pfam" id="PF03119">
    <property type="entry name" value="DNA_ligase_ZBD"/>
    <property type="match status" value="1"/>
</dbReference>
<dbReference type="Pfam" id="PF12826">
    <property type="entry name" value="HHH_2"/>
    <property type="match status" value="1"/>
</dbReference>
<dbReference type="PIRSF" id="PIRSF001604">
    <property type="entry name" value="LigA"/>
    <property type="match status" value="1"/>
</dbReference>
<dbReference type="SMART" id="SM00292">
    <property type="entry name" value="BRCT"/>
    <property type="match status" value="1"/>
</dbReference>
<dbReference type="SMART" id="SM00278">
    <property type="entry name" value="HhH1"/>
    <property type="match status" value="3"/>
</dbReference>
<dbReference type="SMART" id="SM00532">
    <property type="entry name" value="LIGANc"/>
    <property type="match status" value="1"/>
</dbReference>
<dbReference type="SUPFAM" id="SSF52113">
    <property type="entry name" value="BRCT domain"/>
    <property type="match status" value="1"/>
</dbReference>
<dbReference type="SUPFAM" id="SSF56091">
    <property type="entry name" value="DNA ligase/mRNA capping enzyme, catalytic domain"/>
    <property type="match status" value="1"/>
</dbReference>
<dbReference type="SUPFAM" id="SSF50249">
    <property type="entry name" value="Nucleic acid-binding proteins"/>
    <property type="match status" value="1"/>
</dbReference>
<dbReference type="SUPFAM" id="SSF47781">
    <property type="entry name" value="RuvA domain 2-like"/>
    <property type="match status" value="1"/>
</dbReference>
<dbReference type="PROSITE" id="PS50172">
    <property type="entry name" value="BRCT"/>
    <property type="match status" value="1"/>
</dbReference>
<dbReference type="PROSITE" id="PS01055">
    <property type="entry name" value="DNA_LIGASE_N1"/>
    <property type="match status" value="1"/>
</dbReference>
<dbReference type="PROSITE" id="PS01056">
    <property type="entry name" value="DNA_LIGASE_N2"/>
    <property type="match status" value="1"/>
</dbReference>
<organism>
    <name type="scientific">Leuconostoc citreum (strain KM20)</name>
    <dbReference type="NCBI Taxonomy" id="349519"/>
    <lineage>
        <taxon>Bacteria</taxon>
        <taxon>Bacillati</taxon>
        <taxon>Bacillota</taxon>
        <taxon>Bacilli</taxon>
        <taxon>Lactobacillales</taxon>
        <taxon>Lactobacillaceae</taxon>
        <taxon>Leuconostoc</taxon>
    </lineage>
</organism>
<comment type="function">
    <text evidence="1">DNA ligase that catalyzes the formation of phosphodiester linkages between 5'-phosphoryl and 3'-hydroxyl groups in double-stranded DNA using NAD as a coenzyme and as the energy source for the reaction. It is essential for DNA replication and repair of damaged DNA.</text>
</comment>
<comment type="catalytic activity">
    <reaction evidence="1">
        <text>NAD(+) + (deoxyribonucleotide)n-3'-hydroxyl + 5'-phospho-(deoxyribonucleotide)m = (deoxyribonucleotide)n+m + AMP + beta-nicotinamide D-nucleotide.</text>
        <dbReference type="EC" id="6.5.1.2"/>
    </reaction>
</comment>
<comment type="cofactor">
    <cofactor evidence="1">
        <name>Mg(2+)</name>
        <dbReference type="ChEBI" id="CHEBI:18420"/>
    </cofactor>
    <cofactor evidence="1">
        <name>Mn(2+)</name>
        <dbReference type="ChEBI" id="CHEBI:29035"/>
    </cofactor>
</comment>
<comment type="similarity">
    <text evidence="1">Belongs to the NAD-dependent DNA ligase family. LigA subfamily.</text>
</comment>
<accession>B1MXQ8</accession>
<reference key="1">
    <citation type="journal article" date="2008" name="J. Bacteriol.">
        <title>Complete genome sequence of Leuconostoc citreum KM20.</title>
        <authorList>
            <person name="Kim J.F."/>
            <person name="Jeong H."/>
            <person name="Lee J.-S."/>
            <person name="Choi S.-H."/>
            <person name="Ha M."/>
            <person name="Hur C.-G."/>
            <person name="Kim J.-S."/>
            <person name="Lee S."/>
            <person name="Park H.-S."/>
            <person name="Park Y.-H."/>
            <person name="Oh T.K."/>
        </authorList>
    </citation>
    <scope>NUCLEOTIDE SEQUENCE [LARGE SCALE GENOMIC DNA]</scope>
    <source>
        <strain>KM20</strain>
    </source>
</reference>
<sequence length="681" mass="74460">MLPEFTPVNNLTTQMAQQEIATLQKRLTDYGVAYYEEDAPLVEDYIYDAFYARLVLLEAQFPQFVTPDSPTQNVGGAKVKSGLAKVVHPAPMLSLGDVFSLEELQEWDERTTKTLGFQSEYNLELKIDGLAVALTYVDGKLVQASTRGNGSIGEDVTANVKTIRSIPQTLTEPITIEVRGEIYMPKSSFATLNKQREADGLEPFANPRNAAAGSLRQLNVAITKKRELSAFVYYTADPDAIGVTTQSGALERFAALGLPTDDHNRVIATMADIDAYIAEYTSQRERLAYGIDGVVVKVNQLDNQLDLGHTVKIPRWAIAYKFPPEEALTVVRDIEWTVGRTGAVTPTAVMDPVQLAGTTVQRASLHNPDYLNAKDIRIGDTVTLHKAGDIIPEIGQVLLAERPANNQVYDIPTFCPACHSELVHLDGEVALRCINPFCVAQIQEKLTHFASRNAMNIDGMGPRVVSQLLKANYIQDVASIYRLQETQLLSLDKFKEKSVTNLLSAITTSKSNSLERLLFGLGIRMVGAKAARLIAEKFKTLQAIADASVIDIASIAGIGETIALSVVQYFKTPEAKQLLIELQEAGVNQTYLSDVIVDETSFFYGKKIVLTGKLEKGSRTEATKWLQDHGAQVTGSVSAKTDLLIAGEDAGSKLDKANALGVTVWDEQAFIEAQAKEGTDK</sequence>
<feature type="chain" id="PRO_0000380409" description="DNA ligase">
    <location>
        <begin position="1"/>
        <end position="681"/>
    </location>
</feature>
<feature type="domain" description="BRCT" evidence="1">
    <location>
        <begin position="598"/>
        <end position="681"/>
    </location>
</feature>
<feature type="active site" description="N6-AMP-lysine intermediate" evidence="1">
    <location>
        <position position="126"/>
    </location>
</feature>
<feature type="binding site" evidence="1">
    <location>
        <begin position="44"/>
        <end position="48"/>
    </location>
    <ligand>
        <name>NAD(+)</name>
        <dbReference type="ChEBI" id="CHEBI:57540"/>
    </ligand>
</feature>
<feature type="binding site" evidence="1">
    <location>
        <begin position="94"/>
        <end position="95"/>
    </location>
    <ligand>
        <name>NAD(+)</name>
        <dbReference type="ChEBI" id="CHEBI:57540"/>
    </ligand>
</feature>
<feature type="binding site" evidence="1">
    <location>
        <position position="124"/>
    </location>
    <ligand>
        <name>NAD(+)</name>
        <dbReference type="ChEBI" id="CHEBI:57540"/>
    </ligand>
</feature>
<feature type="binding site" evidence="1">
    <location>
        <position position="147"/>
    </location>
    <ligand>
        <name>NAD(+)</name>
        <dbReference type="ChEBI" id="CHEBI:57540"/>
    </ligand>
</feature>
<feature type="binding site" evidence="1">
    <location>
        <position position="181"/>
    </location>
    <ligand>
        <name>NAD(+)</name>
        <dbReference type="ChEBI" id="CHEBI:57540"/>
    </ligand>
</feature>
<feature type="binding site" evidence="1">
    <location>
        <position position="297"/>
    </location>
    <ligand>
        <name>NAD(+)</name>
        <dbReference type="ChEBI" id="CHEBI:57540"/>
    </ligand>
</feature>
<feature type="binding site" evidence="1">
    <location>
        <position position="321"/>
    </location>
    <ligand>
        <name>NAD(+)</name>
        <dbReference type="ChEBI" id="CHEBI:57540"/>
    </ligand>
</feature>
<feature type="binding site" evidence="1">
    <location>
        <position position="415"/>
    </location>
    <ligand>
        <name>Zn(2+)</name>
        <dbReference type="ChEBI" id="CHEBI:29105"/>
    </ligand>
</feature>
<feature type="binding site" evidence="1">
    <location>
        <position position="418"/>
    </location>
    <ligand>
        <name>Zn(2+)</name>
        <dbReference type="ChEBI" id="CHEBI:29105"/>
    </ligand>
</feature>
<feature type="binding site" evidence="1">
    <location>
        <position position="433"/>
    </location>
    <ligand>
        <name>Zn(2+)</name>
        <dbReference type="ChEBI" id="CHEBI:29105"/>
    </ligand>
</feature>
<feature type="binding site" evidence="1">
    <location>
        <position position="438"/>
    </location>
    <ligand>
        <name>Zn(2+)</name>
        <dbReference type="ChEBI" id="CHEBI:29105"/>
    </ligand>
</feature>
<gene>
    <name evidence="1" type="primary">ligA</name>
    <name type="ordered locus">LCK_00477</name>
</gene>
<protein>
    <recommendedName>
        <fullName evidence="1">DNA ligase</fullName>
        <ecNumber evidence="1">6.5.1.2</ecNumber>
    </recommendedName>
    <alternativeName>
        <fullName evidence="1">Polydeoxyribonucleotide synthase [NAD(+)]</fullName>
    </alternativeName>
</protein>
<proteinExistence type="inferred from homology"/>
<evidence type="ECO:0000255" key="1">
    <source>
        <dbReference type="HAMAP-Rule" id="MF_01588"/>
    </source>
</evidence>
<keyword id="KW-0227">DNA damage</keyword>
<keyword id="KW-0234">DNA repair</keyword>
<keyword id="KW-0235">DNA replication</keyword>
<keyword id="KW-0436">Ligase</keyword>
<keyword id="KW-0460">Magnesium</keyword>
<keyword id="KW-0464">Manganese</keyword>
<keyword id="KW-0479">Metal-binding</keyword>
<keyword id="KW-0520">NAD</keyword>
<keyword id="KW-1185">Reference proteome</keyword>
<keyword id="KW-0862">Zinc</keyword>
<name>DNLJ_LEUCK</name>